<accession>Q6GQF5</accession>
<organism>
    <name type="scientific">Xenopus laevis</name>
    <name type="common">African clawed frog</name>
    <dbReference type="NCBI Taxonomy" id="8355"/>
    <lineage>
        <taxon>Eukaryota</taxon>
        <taxon>Metazoa</taxon>
        <taxon>Chordata</taxon>
        <taxon>Craniata</taxon>
        <taxon>Vertebrata</taxon>
        <taxon>Euteleostomi</taxon>
        <taxon>Amphibia</taxon>
        <taxon>Batrachia</taxon>
        <taxon>Anura</taxon>
        <taxon>Pipoidea</taxon>
        <taxon>Pipidae</taxon>
        <taxon>Xenopodinae</taxon>
        <taxon>Xenopus</taxon>
        <taxon>Xenopus</taxon>
    </lineage>
</organism>
<sequence length="268" mass="29890">MVRKSPGSGKEEDFTFISPVVKYLLIFFNMLFWVISMVMVGIGVYARLLKHAEAAMACLAVDPALLLIGVGILMFLITFCGCIGSLRENICLLQTFSICLTLVFLLQLAVGIVGFIFSDKARGKVSEIISNAIEHYRDDLDLQNLIDFGQKEFSCCGGISYKDWSQNMYFNCSSENRSQERCSVPYSCCLHDEGEAVINTLCGQGMQELDYLEAGEFIHTNGCIDRLVNWIHSNLFLLGGVALGLAIPQVTKHLRAKLIYTWRIGIQV</sequence>
<proteinExistence type="evidence at transcript level"/>
<name>TSN33_XENLA</name>
<keyword id="KW-0965">Cell junction</keyword>
<keyword id="KW-1003">Cell membrane</keyword>
<keyword id="KW-0963">Cytoplasm</keyword>
<keyword id="KW-1015">Disulfide bond</keyword>
<keyword id="KW-0325">Glycoprotein</keyword>
<keyword id="KW-0472">Membrane</keyword>
<keyword id="KW-1185">Reference proteome</keyword>
<keyword id="KW-0812">Transmembrane</keyword>
<keyword id="KW-1133">Transmembrane helix</keyword>
<reference key="1">
    <citation type="submission" date="2004-06" db="EMBL/GenBank/DDBJ databases">
        <authorList>
            <consortium name="NIH - Xenopus Gene Collection (XGC) project"/>
        </authorList>
    </citation>
    <scope>NUCLEOTIDE SEQUENCE [LARGE SCALE MRNA]</scope>
    <source>
        <tissue>Spleen</tissue>
    </source>
</reference>
<comment type="function">
    <text evidence="2">Part of TspanC8 subgroup, composed of 6 members that interact with the transmembrane metalloprotease ADAM10. This interaction is required for ADAM10 exit from the endoplasmic reticulum and for enzymatic maturation and trafficking to the cell surface as well as substrate specificity. Different TspanC8/ADAM10 complexes have distinct substrates.</text>
</comment>
<comment type="subunit">
    <text evidence="2">Homodimer; disulfide-linked.</text>
</comment>
<comment type="subcellular location">
    <subcellularLocation>
        <location evidence="2">Cell membrane</location>
        <topology evidence="2">Multi-pass membrane protein</topology>
    </subcellularLocation>
    <subcellularLocation>
        <location evidence="2">Cell junction</location>
        <location evidence="2">Adherens junction</location>
    </subcellularLocation>
    <subcellularLocation>
        <location evidence="2">Cytoplasm</location>
    </subcellularLocation>
</comment>
<comment type="similarity">
    <text evidence="4">Belongs to the tetraspanin (TM4SF) family.</text>
</comment>
<feature type="chain" id="PRO_0000282925" description="Tetraspanin-33">
    <location>
        <begin position="1"/>
        <end position="268"/>
    </location>
</feature>
<feature type="topological domain" description="Cytoplasmic" evidence="3">
    <location>
        <begin position="1"/>
        <end position="23"/>
    </location>
</feature>
<feature type="transmembrane region" description="Helical" evidence="3">
    <location>
        <begin position="24"/>
        <end position="44"/>
    </location>
</feature>
<feature type="topological domain" description="Extracellular" evidence="3">
    <location>
        <begin position="45"/>
        <end position="63"/>
    </location>
</feature>
<feature type="transmembrane region" description="Helical" evidence="3">
    <location>
        <begin position="64"/>
        <end position="84"/>
    </location>
</feature>
<feature type="topological domain" description="Cytoplasmic" evidence="3">
    <location>
        <begin position="85"/>
        <end position="95"/>
    </location>
</feature>
<feature type="transmembrane region" description="Helical" evidence="3">
    <location>
        <begin position="96"/>
        <end position="116"/>
    </location>
</feature>
<feature type="topological domain" description="Extracellular" evidence="3">
    <location>
        <begin position="117"/>
        <end position="226"/>
    </location>
</feature>
<feature type="transmembrane region" description="Helical" evidence="3">
    <location>
        <begin position="227"/>
        <end position="247"/>
    </location>
</feature>
<feature type="topological domain" description="Cytoplasmic" evidence="3">
    <location>
        <begin position="248"/>
        <end position="268"/>
    </location>
</feature>
<feature type="glycosylation site" description="N-linked (GlcNAc...) asparagine" evidence="3">
    <location>
        <position position="171"/>
    </location>
</feature>
<feature type="glycosylation site" description="N-linked (GlcNAc...) asparagine" evidence="3">
    <location>
        <position position="176"/>
    </location>
</feature>
<feature type="disulfide bond" evidence="1">
    <location>
        <begin position="155"/>
        <end position="223"/>
    </location>
</feature>
<feature type="disulfide bond" evidence="1">
    <location>
        <begin position="156"/>
        <end position="188"/>
    </location>
</feature>
<feature type="disulfide bond" evidence="1">
    <location>
        <begin position="172"/>
        <end position="182"/>
    </location>
</feature>
<feature type="disulfide bond" evidence="1">
    <location>
        <begin position="189"/>
        <end position="202"/>
    </location>
</feature>
<gene>
    <name type="primary">tspan33</name>
</gene>
<protein>
    <recommendedName>
        <fullName>Tetraspanin-33</fullName>
        <shortName>Tspan-33</shortName>
    </recommendedName>
</protein>
<dbReference type="EMBL" id="BC072789">
    <property type="protein sequence ID" value="AAH72789.1"/>
    <property type="molecule type" value="mRNA"/>
</dbReference>
<dbReference type="RefSeq" id="NP_001085454.1">
    <property type="nucleotide sequence ID" value="NM_001091985.1"/>
</dbReference>
<dbReference type="SMR" id="Q6GQF5"/>
<dbReference type="GlyCosmos" id="Q6GQF5">
    <property type="glycosylation" value="2 sites, No reported glycans"/>
</dbReference>
<dbReference type="DNASU" id="443880"/>
<dbReference type="AGR" id="Xenbase:XB-GENE-960026"/>
<dbReference type="Xenbase" id="XB-GENE-960026">
    <property type="gene designation" value="tspan33.L"/>
</dbReference>
<dbReference type="Proteomes" id="UP000186698">
    <property type="component" value="Unplaced"/>
</dbReference>
<dbReference type="Bgee" id="443880">
    <property type="expression patterns" value="Expressed in brain and 17 other cell types or tissues"/>
</dbReference>
<dbReference type="GO" id="GO:0005912">
    <property type="term" value="C:adherens junction"/>
    <property type="evidence" value="ECO:0007669"/>
    <property type="project" value="UniProtKB-SubCell"/>
</dbReference>
<dbReference type="GO" id="GO:0005737">
    <property type="term" value="C:cytoplasm"/>
    <property type="evidence" value="ECO:0007669"/>
    <property type="project" value="UniProtKB-SubCell"/>
</dbReference>
<dbReference type="GO" id="GO:0005886">
    <property type="term" value="C:plasma membrane"/>
    <property type="evidence" value="ECO:0000318"/>
    <property type="project" value="GO_Central"/>
</dbReference>
<dbReference type="GO" id="GO:0072659">
    <property type="term" value="P:protein localization to plasma membrane"/>
    <property type="evidence" value="ECO:0000318"/>
    <property type="project" value="GO_Central"/>
</dbReference>
<dbReference type="GO" id="GO:0051604">
    <property type="term" value="P:protein maturation"/>
    <property type="evidence" value="ECO:0000318"/>
    <property type="project" value="GO_Central"/>
</dbReference>
<dbReference type="CDD" id="cd03158">
    <property type="entry name" value="penumbra_like_LEL"/>
    <property type="match status" value="1"/>
</dbReference>
<dbReference type="FunFam" id="1.10.1450.10:FF:000007">
    <property type="entry name" value="Tetraspanin"/>
    <property type="match status" value="1"/>
</dbReference>
<dbReference type="Gene3D" id="1.10.1450.10">
    <property type="entry name" value="Tetraspanin"/>
    <property type="match status" value="1"/>
</dbReference>
<dbReference type="InterPro" id="IPR018499">
    <property type="entry name" value="Tetraspanin/Peripherin"/>
</dbReference>
<dbReference type="InterPro" id="IPR000301">
    <property type="entry name" value="Tetraspanin_animals"/>
</dbReference>
<dbReference type="InterPro" id="IPR008952">
    <property type="entry name" value="Tetraspanin_EC2_sf"/>
</dbReference>
<dbReference type="PANTHER" id="PTHR19282">
    <property type="entry name" value="TETRASPANIN"/>
    <property type="match status" value="1"/>
</dbReference>
<dbReference type="PANTHER" id="PTHR19282:SF154">
    <property type="entry name" value="TETRASPANIN-33"/>
    <property type="match status" value="1"/>
</dbReference>
<dbReference type="Pfam" id="PF00335">
    <property type="entry name" value="Tetraspanin"/>
    <property type="match status" value="1"/>
</dbReference>
<dbReference type="PIRSF" id="PIRSF002419">
    <property type="entry name" value="Tetraspanin"/>
    <property type="match status" value="1"/>
</dbReference>
<dbReference type="PRINTS" id="PR00259">
    <property type="entry name" value="TMFOUR"/>
</dbReference>
<dbReference type="SUPFAM" id="SSF48652">
    <property type="entry name" value="Tetraspanin"/>
    <property type="match status" value="1"/>
</dbReference>
<evidence type="ECO:0000250" key="1">
    <source>
        <dbReference type="UniProtKB" id="O95858"/>
    </source>
</evidence>
<evidence type="ECO:0000250" key="2">
    <source>
        <dbReference type="UniProtKB" id="Q86UF1"/>
    </source>
</evidence>
<evidence type="ECO:0000255" key="3"/>
<evidence type="ECO:0000305" key="4"/>